<protein>
    <recommendedName>
        <fullName>PHD finger protein 11</fullName>
    </recommendedName>
    <alternativeName>
        <fullName>PHD finger protein 11-like</fullName>
    </alternativeName>
    <alternativeName>
        <fullName>PHD finger protein 11D</fullName>
    </alternativeName>
</protein>
<proteinExistence type="evidence at transcript level"/>
<sequence length="337" mass="37728">MAQETAPPCGPVSRGDSPIIEKMEKRTCALCPEGHEWSQIYFSPSGNIVAHENCLLYSSGLVECETLDLRNTIRNFDVKSVKKEIWRGRRLKCSFCNKGGATVGCDLWFCKKSYHYVCAKKDQAILQVDGNHGTYKLFCPEHSPEQEEATESADDPSMKKKRGKNKRLSSGPPAQPKTMKCSNAKRHMTEEPHGHTDAAVKSPFLKKCQEAGLLTELFEHILENMDSVHGRLVDETASESDYEGIETLLFDCGLFKDTLRKFQEVIKSKACEWEERQRQMKQQLEALADLQQSLCSFQENGDLDCSSSTSGSLLPPEDHQVRSQESPEVQAGSGDSL</sequence>
<evidence type="ECO:0000250" key="1"/>
<evidence type="ECO:0000255" key="2">
    <source>
        <dbReference type="PROSITE-ProRule" id="PRU01146"/>
    </source>
</evidence>
<evidence type="ECO:0000256" key="3">
    <source>
        <dbReference type="SAM" id="MobiDB-lite"/>
    </source>
</evidence>
<evidence type="ECO:0000303" key="4">
    <source>
    </source>
</evidence>
<evidence type="ECO:0000303" key="5">
    <source>
    </source>
</evidence>
<evidence type="ECO:0000305" key="6"/>
<accession>A6H5X4</accession>
<accession>Q3U0T6</accession>
<accession>Q8K2R8</accession>
<gene>
    <name type="primary">Phf11</name>
    <name type="synonym">D14Ertd668e</name>
    <name type="synonym">Phf11d</name>
    <name type="synonym">Phf11l</name>
</gene>
<name>PHF11_MOUSE</name>
<dbReference type="EMBL" id="AK156583">
    <property type="protein sequence ID" value="BAE33765.1"/>
    <property type="molecule type" value="mRNA"/>
</dbReference>
<dbReference type="EMBL" id="BC030186">
    <property type="protein sequence ID" value="AAH30186.1"/>
    <property type="status" value="ALT_INIT"/>
    <property type="molecule type" value="mRNA"/>
</dbReference>
<dbReference type="EMBL" id="BC145673">
    <property type="protein sequence ID" value="AAI45674.1"/>
    <property type="molecule type" value="mRNA"/>
</dbReference>
<dbReference type="CCDS" id="CCDS27170.3">
    <molecule id="A6H5X4-3"/>
</dbReference>
<dbReference type="RefSeq" id="NP_950180.3">
    <molecule id="A6H5X4-3"/>
    <property type="nucleotide sequence ID" value="NM_199015.4"/>
</dbReference>
<dbReference type="SMR" id="A6H5X4"/>
<dbReference type="FunCoup" id="A6H5X4">
    <property type="interactions" value="1096"/>
</dbReference>
<dbReference type="STRING" id="10090.ENSMUSP00000092779"/>
<dbReference type="iPTMnet" id="A6H5X4"/>
<dbReference type="PhosphoSitePlus" id="A6H5X4"/>
<dbReference type="jPOST" id="A6H5X4"/>
<dbReference type="PeptideAtlas" id="A6H5X4"/>
<dbReference type="ProteomicsDB" id="288189">
    <molecule id="A6H5X4-1"/>
</dbReference>
<dbReference type="ProteomicsDB" id="288190">
    <molecule id="A6H5X4-2"/>
</dbReference>
<dbReference type="ProteomicsDB" id="288191">
    <molecule id="A6H5X4-3"/>
</dbReference>
<dbReference type="DNASU" id="219132"/>
<dbReference type="Ensembl" id="ENSMUST00000095157.11">
    <molecule id="A6H5X4-3"/>
    <property type="protein sequence ID" value="ENSMUSP00000092779.5"/>
    <property type="gene ID" value="ENSMUSG00000068245.15"/>
</dbReference>
<dbReference type="Ensembl" id="ENSMUST00000160425.8">
    <molecule id="A6H5X4-2"/>
    <property type="protein sequence ID" value="ENSMUSP00000124578.2"/>
    <property type="gene ID" value="ENSMUSG00000068245.15"/>
</dbReference>
<dbReference type="Ensembl" id="ENSMUST00000161031.2">
    <molecule id="A6H5X4-1"/>
    <property type="protein sequence ID" value="ENSMUSP00000125181.2"/>
    <property type="gene ID" value="ENSMUSG00000068245.15"/>
</dbReference>
<dbReference type="GeneID" id="219132"/>
<dbReference type="KEGG" id="mmu:219132"/>
<dbReference type="UCSC" id="uc007uef.2">
    <molecule id="A6H5X4-2"/>
    <property type="organism name" value="mouse"/>
</dbReference>
<dbReference type="UCSC" id="uc007ueg.2">
    <molecule id="A6H5X4-1"/>
    <property type="organism name" value="mouse"/>
</dbReference>
<dbReference type="AGR" id="MGI:1277133"/>
<dbReference type="CTD" id="219132"/>
<dbReference type="MGI" id="MGI:1277133">
    <property type="gene designation" value="Phf11d"/>
</dbReference>
<dbReference type="VEuPathDB" id="HostDB:ENSMUSG00000068245"/>
<dbReference type="eggNOG" id="KOG1084">
    <property type="taxonomic scope" value="Eukaryota"/>
</dbReference>
<dbReference type="GeneTree" id="ENSGT00950000182865"/>
<dbReference type="HOGENOM" id="CLU_076108_0_0_1"/>
<dbReference type="InParanoid" id="A6H5X4"/>
<dbReference type="OMA" id="ECEDHDS"/>
<dbReference type="OrthoDB" id="2384350at2759"/>
<dbReference type="PhylomeDB" id="A6H5X4"/>
<dbReference type="TreeFam" id="TF325426"/>
<dbReference type="BioGRID-ORCS" id="219132">
    <property type="hits" value="5 hits in 78 CRISPR screens"/>
</dbReference>
<dbReference type="ChiTaRS" id="Phf11d">
    <property type="organism name" value="mouse"/>
</dbReference>
<dbReference type="PRO" id="PR:A6H5X4"/>
<dbReference type="Proteomes" id="UP000000589">
    <property type="component" value="Chromosome 14"/>
</dbReference>
<dbReference type="RNAct" id="A6H5X4">
    <property type="molecule type" value="protein"/>
</dbReference>
<dbReference type="Bgee" id="ENSMUSG00000068245">
    <property type="expression patterns" value="Expressed in embryonic cell in blastocyst and 67 other cell types or tissues"/>
</dbReference>
<dbReference type="GO" id="GO:0005634">
    <property type="term" value="C:nucleus"/>
    <property type="evidence" value="ECO:0007669"/>
    <property type="project" value="UniProtKB-SubCell"/>
</dbReference>
<dbReference type="GO" id="GO:0008270">
    <property type="term" value="F:zinc ion binding"/>
    <property type="evidence" value="ECO:0007669"/>
    <property type="project" value="UniProtKB-KW"/>
</dbReference>
<dbReference type="FunFam" id="3.30.40.10:FF:000425">
    <property type="entry name" value="PHD finger protein 11"/>
    <property type="match status" value="1"/>
</dbReference>
<dbReference type="Gene3D" id="3.30.40.10">
    <property type="entry name" value="Zinc/RING finger domain, C3HC4 (zinc finger)"/>
    <property type="match status" value="1"/>
</dbReference>
<dbReference type="InterPro" id="IPR034732">
    <property type="entry name" value="EPHD"/>
</dbReference>
<dbReference type="InterPro" id="IPR051188">
    <property type="entry name" value="PHD-type_Zinc_Finger"/>
</dbReference>
<dbReference type="InterPro" id="IPR011011">
    <property type="entry name" value="Znf_FYVE_PHD"/>
</dbReference>
<dbReference type="InterPro" id="IPR001965">
    <property type="entry name" value="Znf_PHD"/>
</dbReference>
<dbReference type="InterPro" id="IPR013083">
    <property type="entry name" value="Znf_RING/FYVE/PHD"/>
</dbReference>
<dbReference type="PANTHER" id="PTHR12420">
    <property type="entry name" value="PHD FINGER PROTEIN"/>
    <property type="match status" value="1"/>
</dbReference>
<dbReference type="PANTHER" id="PTHR12420:SF4">
    <property type="entry name" value="PHD FINGER PROTEIN 11"/>
    <property type="match status" value="1"/>
</dbReference>
<dbReference type="Pfam" id="PF13771">
    <property type="entry name" value="zf-HC5HC2H"/>
    <property type="match status" value="1"/>
</dbReference>
<dbReference type="SMART" id="SM00249">
    <property type="entry name" value="PHD"/>
    <property type="match status" value="1"/>
</dbReference>
<dbReference type="SUPFAM" id="SSF57903">
    <property type="entry name" value="FYVE/PHD zinc finger"/>
    <property type="match status" value="1"/>
</dbReference>
<dbReference type="PROSITE" id="PS51805">
    <property type="entry name" value="EPHD"/>
    <property type="match status" value="1"/>
</dbReference>
<feature type="chain" id="PRO_0000385015" description="PHD finger protein 11">
    <location>
        <begin position="1"/>
        <end position="337"/>
    </location>
</feature>
<feature type="zinc finger region" description="C2HC pre-PHD-type" evidence="2">
    <location>
        <begin position="25"/>
        <end position="61"/>
    </location>
</feature>
<feature type="zinc finger region" description="PHD-type" evidence="2">
    <location>
        <begin position="91"/>
        <end position="143"/>
    </location>
</feature>
<feature type="region of interest" description="Disordered" evidence="3">
    <location>
        <begin position="145"/>
        <end position="196"/>
    </location>
</feature>
<feature type="region of interest" description="Disordered" evidence="3">
    <location>
        <begin position="301"/>
        <end position="337"/>
    </location>
</feature>
<feature type="compositionally biased region" description="Basic and acidic residues" evidence="3">
    <location>
        <begin position="187"/>
        <end position="196"/>
    </location>
</feature>
<feature type="compositionally biased region" description="Polar residues" evidence="3">
    <location>
        <begin position="301"/>
        <end position="312"/>
    </location>
</feature>
<feature type="compositionally biased region" description="Polar residues" evidence="3">
    <location>
        <begin position="323"/>
        <end position="337"/>
    </location>
</feature>
<feature type="splice variant" id="VSP_038089" description="In isoform 2." evidence="4">
    <location>
        <begin position="197"/>
        <end position="264"/>
    </location>
</feature>
<feature type="splice variant" id="VSP_038090" description="In isoform 3." evidence="5">
    <location>
        <begin position="321"/>
        <end position="337"/>
    </location>
</feature>
<feature type="sequence conflict" description="In Ref. 2; AAH30186." evidence="6" ref="2">
    <original>I</original>
    <variation>V</variation>
    <location>
        <position position="125"/>
    </location>
</feature>
<feature type="sequence conflict" description="In Ref. 2; AAH30186." evidence="6" ref="2">
    <original>Q</original>
    <variation>K</variation>
    <location>
        <position position="282"/>
    </location>
</feature>
<feature type="sequence conflict" description="In Ref. 2; AAH30186." evidence="6" ref="2">
    <original>S</original>
    <variation>T</variation>
    <location>
        <position position="293"/>
    </location>
</feature>
<feature type="sequence conflict" description="In Ref. 2; AAH30186." evidence="6" ref="2">
    <original>S</original>
    <variation>C</variation>
    <location>
        <position position="323"/>
    </location>
</feature>
<reference key="1">
    <citation type="journal article" date="2005" name="Science">
        <title>The transcriptional landscape of the mammalian genome.</title>
        <authorList>
            <person name="Carninci P."/>
            <person name="Kasukawa T."/>
            <person name="Katayama S."/>
            <person name="Gough J."/>
            <person name="Frith M.C."/>
            <person name="Maeda N."/>
            <person name="Oyama R."/>
            <person name="Ravasi T."/>
            <person name="Lenhard B."/>
            <person name="Wells C."/>
            <person name="Kodzius R."/>
            <person name="Shimokawa K."/>
            <person name="Bajic V.B."/>
            <person name="Brenner S.E."/>
            <person name="Batalov S."/>
            <person name="Forrest A.R."/>
            <person name="Zavolan M."/>
            <person name="Davis M.J."/>
            <person name="Wilming L.G."/>
            <person name="Aidinis V."/>
            <person name="Allen J.E."/>
            <person name="Ambesi-Impiombato A."/>
            <person name="Apweiler R."/>
            <person name="Aturaliya R.N."/>
            <person name="Bailey T.L."/>
            <person name="Bansal M."/>
            <person name="Baxter L."/>
            <person name="Beisel K.W."/>
            <person name="Bersano T."/>
            <person name="Bono H."/>
            <person name="Chalk A.M."/>
            <person name="Chiu K.P."/>
            <person name="Choudhary V."/>
            <person name="Christoffels A."/>
            <person name="Clutterbuck D.R."/>
            <person name="Crowe M.L."/>
            <person name="Dalla E."/>
            <person name="Dalrymple B.P."/>
            <person name="de Bono B."/>
            <person name="Della Gatta G."/>
            <person name="di Bernardo D."/>
            <person name="Down T."/>
            <person name="Engstrom P."/>
            <person name="Fagiolini M."/>
            <person name="Faulkner G."/>
            <person name="Fletcher C.F."/>
            <person name="Fukushima T."/>
            <person name="Furuno M."/>
            <person name="Futaki S."/>
            <person name="Gariboldi M."/>
            <person name="Georgii-Hemming P."/>
            <person name="Gingeras T.R."/>
            <person name="Gojobori T."/>
            <person name="Green R.E."/>
            <person name="Gustincich S."/>
            <person name="Harbers M."/>
            <person name="Hayashi Y."/>
            <person name="Hensch T.K."/>
            <person name="Hirokawa N."/>
            <person name="Hill D."/>
            <person name="Huminiecki L."/>
            <person name="Iacono M."/>
            <person name="Ikeo K."/>
            <person name="Iwama A."/>
            <person name="Ishikawa T."/>
            <person name="Jakt M."/>
            <person name="Kanapin A."/>
            <person name="Katoh M."/>
            <person name="Kawasawa Y."/>
            <person name="Kelso J."/>
            <person name="Kitamura H."/>
            <person name="Kitano H."/>
            <person name="Kollias G."/>
            <person name="Krishnan S.P."/>
            <person name="Kruger A."/>
            <person name="Kummerfeld S.K."/>
            <person name="Kurochkin I.V."/>
            <person name="Lareau L.F."/>
            <person name="Lazarevic D."/>
            <person name="Lipovich L."/>
            <person name="Liu J."/>
            <person name="Liuni S."/>
            <person name="McWilliam S."/>
            <person name="Madan Babu M."/>
            <person name="Madera M."/>
            <person name="Marchionni L."/>
            <person name="Matsuda H."/>
            <person name="Matsuzawa S."/>
            <person name="Miki H."/>
            <person name="Mignone F."/>
            <person name="Miyake S."/>
            <person name="Morris K."/>
            <person name="Mottagui-Tabar S."/>
            <person name="Mulder N."/>
            <person name="Nakano N."/>
            <person name="Nakauchi H."/>
            <person name="Ng P."/>
            <person name="Nilsson R."/>
            <person name="Nishiguchi S."/>
            <person name="Nishikawa S."/>
            <person name="Nori F."/>
            <person name="Ohara O."/>
            <person name="Okazaki Y."/>
            <person name="Orlando V."/>
            <person name="Pang K.C."/>
            <person name="Pavan W.J."/>
            <person name="Pavesi G."/>
            <person name="Pesole G."/>
            <person name="Petrovsky N."/>
            <person name="Piazza S."/>
            <person name="Reed J."/>
            <person name="Reid J.F."/>
            <person name="Ring B.Z."/>
            <person name="Ringwald M."/>
            <person name="Rost B."/>
            <person name="Ruan Y."/>
            <person name="Salzberg S.L."/>
            <person name="Sandelin A."/>
            <person name="Schneider C."/>
            <person name="Schoenbach C."/>
            <person name="Sekiguchi K."/>
            <person name="Semple C.A."/>
            <person name="Seno S."/>
            <person name="Sessa L."/>
            <person name="Sheng Y."/>
            <person name="Shibata Y."/>
            <person name="Shimada H."/>
            <person name="Shimada K."/>
            <person name="Silva D."/>
            <person name="Sinclair B."/>
            <person name="Sperling S."/>
            <person name="Stupka E."/>
            <person name="Sugiura K."/>
            <person name="Sultana R."/>
            <person name="Takenaka Y."/>
            <person name="Taki K."/>
            <person name="Tammoja K."/>
            <person name="Tan S.L."/>
            <person name="Tang S."/>
            <person name="Taylor M.S."/>
            <person name="Tegner J."/>
            <person name="Teichmann S.A."/>
            <person name="Ueda H.R."/>
            <person name="van Nimwegen E."/>
            <person name="Verardo R."/>
            <person name="Wei C.L."/>
            <person name="Yagi K."/>
            <person name="Yamanishi H."/>
            <person name="Zabarovsky E."/>
            <person name="Zhu S."/>
            <person name="Zimmer A."/>
            <person name="Hide W."/>
            <person name="Bult C."/>
            <person name="Grimmond S.M."/>
            <person name="Teasdale R.D."/>
            <person name="Liu E.T."/>
            <person name="Brusic V."/>
            <person name="Quackenbush J."/>
            <person name="Wahlestedt C."/>
            <person name="Mattick J.S."/>
            <person name="Hume D.A."/>
            <person name="Kai C."/>
            <person name="Sasaki D."/>
            <person name="Tomaru Y."/>
            <person name="Fukuda S."/>
            <person name="Kanamori-Katayama M."/>
            <person name="Suzuki M."/>
            <person name="Aoki J."/>
            <person name="Arakawa T."/>
            <person name="Iida J."/>
            <person name="Imamura K."/>
            <person name="Itoh M."/>
            <person name="Kato T."/>
            <person name="Kawaji H."/>
            <person name="Kawagashira N."/>
            <person name="Kawashima T."/>
            <person name="Kojima M."/>
            <person name="Kondo S."/>
            <person name="Konno H."/>
            <person name="Nakano K."/>
            <person name="Ninomiya N."/>
            <person name="Nishio T."/>
            <person name="Okada M."/>
            <person name="Plessy C."/>
            <person name="Shibata K."/>
            <person name="Shiraki T."/>
            <person name="Suzuki S."/>
            <person name="Tagami M."/>
            <person name="Waki K."/>
            <person name="Watahiki A."/>
            <person name="Okamura-Oho Y."/>
            <person name="Suzuki H."/>
            <person name="Kawai J."/>
            <person name="Hayashizaki Y."/>
        </authorList>
    </citation>
    <scope>NUCLEOTIDE SEQUENCE [LARGE SCALE MRNA] (ISOFORM 3)</scope>
    <source>
        <strain>NOD</strain>
    </source>
</reference>
<reference key="2">
    <citation type="journal article" date="2004" name="Genome Res.">
        <title>The status, quality, and expansion of the NIH full-length cDNA project: the Mammalian Gene Collection (MGC).</title>
        <authorList>
            <consortium name="The MGC Project Team"/>
        </authorList>
    </citation>
    <scope>NUCLEOTIDE SEQUENCE [LARGE SCALE MRNA] (ISOFORMS 1 AND 2)</scope>
    <source>
        <strain>Czech II</strain>
        <tissue>Brain</tissue>
        <tissue>Mammary tumor</tissue>
    </source>
</reference>
<keyword id="KW-0010">Activator</keyword>
<keyword id="KW-0025">Alternative splicing</keyword>
<keyword id="KW-0479">Metal-binding</keyword>
<keyword id="KW-0539">Nucleus</keyword>
<keyword id="KW-1185">Reference proteome</keyword>
<keyword id="KW-0804">Transcription</keyword>
<keyword id="KW-0805">Transcription regulation</keyword>
<keyword id="KW-0862">Zinc</keyword>
<keyword id="KW-0863">Zinc-finger</keyword>
<comment type="function">
    <text evidence="1">Positive regulator of Th1-type cytokine gene expression.</text>
</comment>
<comment type="subunit">
    <text evidence="1">Interacts with BRCA1 and RELA.</text>
</comment>
<comment type="subcellular location">
    <subcellularLocation>
        <location evidence="1">Nucleus</location>
    </subcellularLocation>
</comment>
<comment type="alternative products">
    <event type="alternative splicing"/>
    <isoform>
        <id>A6H5X4-1</id>
        <name>1</name>
        <sequence type="displayed"/>
    </isoform>
    <isoform>
        <id>A6H5X4-2</id>
        <name>2</name>
        <sequence type="described" ref="VSP_038089"/>
    </isoform>
    <isoform>
        <id>A6H5X4-3</id>
        <name>3</name>
        <sequence type="described" ref="VSP_038090"/>
    </isoform>
</comment>
<comment type="sequence caution" evidence="6">
    <conflict type="erroneous initiation">
        <sequence resource="EMBL-CDS" id="AAH30186"/>
    </conflict>
    <text>Truncated N-terminus.</text>
</comment>
<organism>
    <name type="scientific">Mus musculus</name>
    <name type="common">Mouse</name>
    <dbReference type="NCBI Taxonomy" id="10090"/>
    <lineage>
        <taxon>Eukaryota</taxon>
        <taxon>Metazoa</taxon>
        <taxon>Chordata</taxon>
        <taxon>Craniata</taxon>
        <taxon>Vertebrata</taxon>
        <taxon>Euteleostomi</taxon>
        <taxon>Mammalia</taxon>
        <taxon>Eutheria</taxon>
        <taxon>Euarchontoglires</taxon>
        <taxon>Glires</taxon>
        <taxon>Rodentia</taxon>
        <taxon>Myomorpha</taxon>
        <taxon>Muroidea</taxon>
        <taxon>Muridae</taxon>
        <taxon>Murinae</taxon>
        <taxon>Mus</taxon>
        <taxon>Mus</taxon>
    </lineage>
</organism>